<dbReference type="EMBL" id="CP001185">
    <property type="protein sequence ID" value="ACJ75685.1"/>
    <property type="molecule type" value="Genomic_DNA"/>
</dbReference>
<dbReference type="RefSeq" id="WP_012580084.1">
    <property type="nucleotide sequence ID" value="NC_011653.1"/>
</dbReference>
<dbReference type="SMR" id="B7IHX1"/>
<dbReference type="STRING" id="484019.THA_1240"/>
<dbReference type="KEGG" id="taf:THA_1240"/>
<dbReference type="eggNOG" id="COG0100">
    <property type="taxonomic scope" value="Bacteria"/>
</dbReference>
<dbReference type="HOGENOM" id="CLU_072439_5_0_0"/>
<dbReference type="OrthoDB" id="9806415at2"/>
<dbReference type="Proteomes" id="UP000002453">
    <property type="component" value="Chromosome"/>
</dbReference>
<dbReference type="GO" id="GO:1990904">
    <property type="term" value="C:ribonucleoprotein complex"/>
    <property type="evidence" value="ECO:0007669"/>
    <property type="project" value="UniProtKB-KW"/>
</dbReference>
<dbReference type="GO" id="GO:0005840">
    <property type="term" value="C:ribosome"/>
    <property type="evidence" value="ECO:0007669"/>
    <property type="project" value="UniProtKB-KW"/>
</dbReference>
<dbReference type="GO" id="GO:0019843">
    <property type="term" value="F:rRNA binding"/>
    <property type="evidence" value="ECO:0007669"/>
    <property type="project" value="UniProtKB-UniRule"/>
</dbReference>
<dbReference type="GO" id="GO:0003735">
    <property type="term" value="F:structural constituent of ribosome"/>
    <property type="evidence" value="ECO:0007669"/>
    <property type="project" value="InterPro"/>
</dbReference>
<dbReference type="GO" id="GO:0006412">
    <property type="term" value="P:translation"/>
    <property type="evidence" value="ECO:0007669"/>
    <property type="project" value="UniProtKB-UniRule"/>
</dbReference>
<dbReference type="FunFam" id="3.30.420.80:FF:000010">
    <property type="entry name" value="30S ribosomal protein S11"/>
    <property type="match status" value="1"/>
</dbReference>
<dbReference type="Gene3D" id="3.30.420.80">
    <property type="entry name" value="Ribosomal protein S11"/>
    <property type="match status" value="1"/>
</dbReference>
<dbReference type="HAMAP" id="MF_01310">
    <property type="entry name" value="Ribosomal_uS11"/>
    <property type="match status" value="1"/>
</dbReference>
<dbReference type="InterPro" id="IPR001971">
    <property type="entry name" value="Ribosomal_uS11"/>
</dbReference>
<dbReference type="InterPro" id="IPR019981">
    <property type="entry name" value="Ribosomal_uS11_bac-type"/>
</dbReference>
<dbReference type="InterPro" id="IPR018102">
    <property type="entry name" value="Ribosomal_uS11_CS"/>
</dbReference>
<dbReference type="InterPro" id="IPR036967">
    <property type="entry name" value="Ribosomal_uS11_sf"/>
</dbReference>
<dbReference type="NCBIfam" id="NF003698">
    <property type="entry name" value="PRK05309.1"/>
    <property type="match status" value="1"/>
</dbReference>
<dbReference type="NCBIfam" id="TIGR03632">
    <property type="entry name" value="uS11_bact"/>
    <property type="match status" value="1"/>
</dbReference>
<dbReference type="PANTHER" id="PTHR11759">
    <property type="entry name" value="40S RIBOSOMAL PROTEIN S14/30S RIBOSOMAL PROTEIN S11"/>
    <property type="match status" value="1"/>
</dbReference>
<dbReference type="Pfam" id="PF00411">
    <property type="entry name" value="Ribosomal_S11"/>
    <property type="match status" value="1"/>
</dbReference>
<dbReference type="PIRSF" id="PIRSF002131">
    <property type="entry name" value="Ribosomal_S11"/>
    <property type="match status" value="1"/>
</dbReference>
<dbReference type="SUPFAM" id="SSF53137">
    <property type="entry name" value="Translational machinery components"/>
    <property type="match status" value="1"/>
</dbReference>
<dbReference type="PROSITE" id="PS00054">
    <property type="entry name" value="RIBOSOMAL_S11"/>
    <property type="match status" value="1"/>
</dbReference>
<sequence length="129" mass="13872">MAKKTRRVVKRKKKLTVDRGVVHIKSTYNNTIITLTDPDGKVITWGSGGTAGFQGTRKGTPYAAQLAADQVAKEAVKLGMKKVDILVKGPGSGREAAIRTFQAAGLEIGVIKDVTPIPFNGCRPKKKRV</sequence>
<keyword id="KW-1185">Reference proteome</keyword>
<keyword id="KW-0687">Ribonucleoprotein</keyword>
<keyword id="KW-0689">Ribosomal protein</keyword>
<keyword id="KW-0694">RNA-binding</keyword>
<keyword id="KW-0699">rRNA-binding</keyword>
<protein>
    <recommendedName>
        <fullName evidence="1">Small ribosomal subunit protein uS11</fullName>
    </recommendedName>
    <alternativeName>
        <fullName evidence="2">30S ribosomal protein S11</fullName>
    </alternativeName>
</protein>
<accession>B7IHX1</accession>
<organism>
    <name type="scientific">Thermosipho africanus (strain TCF52B)</name>
    <dbReference type="NCBI Taxonomy" id="484019"/>
    <lineage>
        <taxon>Bacteria</taxon>
        <taxon>Thermotogati</taxon>
        <taxon>Thermotogota</taxon>
        <taxon>Thermotogae</taxon>
        <taxon>Thermotogales</taxon>
        <taxon>Fervidobacteriaceae</taxon>
        <taxon>Thermosipho</taxon>
    </lineage>
</organism>
<comment type="function">
    <text evidence="1">Located on the platform of the 30S subunit, it bridges several disparate RNA helices of the 16S rRNA. Forms part of the Shine-Dalgarno cleft in the 70S ribosome.</text>
</comment>
<comment type="subunit">
    <text evidence="1">Part of the 30S ribosomal subunit. Interacts with proteins S7 and S18. Binds to IF-3.</text>
</comment>
<comment type="similarity">
    <text evidence="1">Belongs to the universal ribosomal protein uS11 family.</text>
</comment>
<feature type="chain" id="PRO_1000141150" description="Small ribosomal subunit protein uS11">
    <location>
        <begin position="1"/>
        <end position="129"/>
    </location>
</feature>
<proteinExistence type="inferred from homology"/>
<evidence type="ECO:0000255" key="1">
    <source>
        <dbReference type="HAMAP-Rule" id="MF_01310"/>
    </source>
</evidence>
<evidence type="ECO:0000305" key="2"/>
<name>RS11_THEAB</name>
<reference key="1">
    <citation type="journal article" date="2009" name="J. Bacteriol.">
        <title>The genome of Thermosipho africanus TCF52B: lateral genetic connections to the Firmicutes and Archaea.</title>
        <authorList>
            <person name="Nesboe C.L."/>
            <person name="Bapteste E."/>
            <person name="Curtis B."/>
            <person name="Dahle H."/>
            <person name="Lopez P."/>
            <person name="Macleod D."/>
            <person name="Dlutek M."/>
            <person name="Bowman S."/>
            <person name="Zhaxybayeva O."/>
            <person name="Birkeland N.-K."/>
            <person name="Doolittle W.F."/>
        </authorList>
    </citation>
    <scope>NUCLEOTIDE SEQUENCE [LARGE SCALE GENOMIC DNA]</scope>
    <source>
        <strain>TCF52B</strain>
    </source>
</reference>
<gene>
    <name evidence="1" type="primary">rpsK</name>
    <name type="ordered locus">THA_1240</name>
</gene>